<comment type="function">
    <text evidence="1">Involved in chromosome partition. Localize to both poles of the predivisional cell following completion of DNA replication. Binds to the DNA origin of replication (By similarity).</text>
</comment>
<comment type="similarity">
    <text evidence="2">Belongs to the ParB family.</text>
</comment>
<name>PARB_RICTY</name>
<keyword id="KW-0159">Chromosome partition</keyword>
<keyword id="KW-0238">DNA-binding</keyword>
<gene>
    <name type="primary">parB</name>
    <name type="ordered locus">RT0073</name>
</gene>
<dbReference type="EMBL" id="AE017197">
    <property type="protein sequence ID" value="AAU03559.1"/>
    <property type="molecule type" value="Genomic_DNA"/>
</dbReference>
<dbReference type="RefSeq" id="WP_011190546.1">
    <property type="nucleotide sequence ID" value="NC_006142.1"/>
</dbReference>
<dbReference type="SMR" id="Q68XT3"/>
<dbReference type="KEGG" id="rty:RT0073"/>
<dbReference type="eggNOG" id="COG1475">
    <property type="taxonomic scope" value="Bacteria"/>
</dbReference>
<dbReference type="HOGENOM" id="CLU_023853_0_0_5"/>
<dbReference type="OrthoDB" id="9802051at2"/>
<dbReference type="Proteomes" id="UP000000604">
    <property type="component" value="Chromosome"/>
</dbReference>
<dbReference type="GO" id="GO:0005694">
    <property type="term" value="C:chromosome"/>
    <property type="evidence" value="ECO:0007669"/>
    <property type="project" value="TreeGrafter"/>
</dbReference>
<dbReference type="GO" id="GO:0003677">
    <property type="term" value="F:DNA binding"/>
    <property type="evidence" value="ECO:0007669"/>
    <property type="project" value="UniProtKB-KW"/>
</dbReference>
<dbReference type="GO" id="GO:0007059">
    <property type="term" value="P:chromosome segregation"/>
    <property type="evidence" value="ECO:0007669"/>
    <property type="project" value="UniProtKB-KW"/>
</dbReference>
<dbReference type="GO" id="GO:0045881">
    <property type="term" value="P:positive regulation of sporulation resulting in formation of a cellular spore"/>
    <property type="evidence" value="ECO:0007669"/>
    <property type="project" value="TreeGrafter"/>
</dbReference>
<dbReference type="CDD" id="cd16393">
    <property type="entry name" value="SPO0J_N"/>
    <property type="match status" value="1"/>
</dbReference>
<dbReference type="FunFam" id="1.10.10.2830:FF:000001">
    <property type="entry name" value="Chromosome partitioning protein ParB"/>
    <property type="match status" value="1"/>
</dbReference>
<dbReference type="FunFam" id="3.90.1530.30:FF:000001">
    <property type="entry name" value="Chromosome partitioning protein ParB"/>
    <property type="match status" value="1"/>
</dbReference>
<dbReference type="Gene3D" id="1.10.10.2830">
    <property type="match status" value="1"/>
</dbReference>
<dbReference type="Gene3D" id="3.90.1530.30">
    <property type="match status" value="1"/>
</dbReference>
<dbReference type="InterPro" id="IPR050336">
    <property type="entry name" value="Chromosome_partition/occlusion"/>
</dbReference>
<dbReference type="InterPro" id="IPR041468">
    <property type="entry name" value="HTH_ParB/Spo0J"/>
</dbReference>
<dbReference type="InterPro" id="IPR004437">
    <property type="entry name" value="ParB/RepB/Spo0J"/>
</dbReference>
<dbReference type="InterPro" id="IPR003115">
    <property type="entry name" value="ParB/Sulfiredoxin_dom"/>
</dbReference>
<dbReference type="InterPro" id="IPR036086">
    <property type="entry name" value="ParB/Sulfiredoxin_sf"/>
</dbReference>
<dbReference type="InterPro" id="IPR057240">
    <property type="entry name" value="ParB_dimer_C"/>
</dbReference>
<dbReference type="NCBIfam" id="TIGR00180">
    <property type="entry name" value="parB_part"/>
    <property type="match status" value="1"/>
</dbReference>
<dbReference type="PANTHER" id="PTHR33375">
    <property type="entry name" value="CHROMOSOME-PARTITIONING PROTEIN PARB-RELATED"/>
    <property type="match status" value="1"/>
</dbReference>
<dbReference type="PANTHER" id="PTHR33375:SF1">
    <property type="entry name" value="CHROMOSOME-PARTITIONING PROTEIN PARB-RELATED"/>
    <property type="match status" value="1"/>
</dbReference>
<dbReference type="Pfam" id="PF17762">
    <property type="entry name" value="HTH_ParB"/>
    <property type="match status" value="1"/>
</dbReference>
<dbReference type="Pfam" id="PF23552">
    <property type="entry name" value="ParB_dimer"/>
    <property type="match status" value="1"/>
</dbReference>
<dbReference type="Pfam" id="PF02195">
    <property type="entry name" value="ParBc"/>
    <property type="match status" value="1"/>
</dbReference>
<dbReference type="SMART" id="SM00470">
    <property type="entry name" value="ParB"/>
    <property type="match status" value="1"/>
</dbReference>
<dbReference type="SUPFAM" id="SSF109709">
    <property type="entry name" value="KorB DNA-binding domain-like"/>
    <property type="match status" value="1"/>
</dbReference>
<dbReference type="SUPFAM" id="SSF110849">
    <property type="entry name" value="ParB/Sulfiredoxin"/>
    <property type="match status" value="1"/>
</dbReference>
<accession>Q68XT3</accession>
<reference key="1">
    <citation type="journal article" date="2004" name="J. Bacteriol.">
        <title>Complete genome sequence of Rickettsia typhi and comparison with sequences of other Rickettsiae.</title>
        <authorList>
            <person name="McLeod M.P."/>
            <person name="Qin X."/>
            <person name="Karpathy S.E."/>
            <person name="Gioia J."/>
            <person name="Highlander S.K."/>
            <person name="Fox G.E."/>
            <person name="McNeill T.Z."/>
            <person name="Jiang H."/>
            <person name="Muzny D."/>
            <person name="Jacob L.S."/>
            <person name="Hawes A.C."/>
            <person name="Sodergren E."/>
            <person name="Gill R."/>
            <person name="Hume J."/>
            <person name="Morgan M."/>
            <person name="Fan G."/>
            <person name="Amin A.G."/>
            <person name="Gibbs R.A."/>
            <person name="Hong C."/>
            <person name="Yu X.-J."/>
            <person name="Walker D.H."/>
            <person name="Weinstock G.M."/>
        </authorList>
    </citation>
    <scope>NUCLEOTIDE SEQUENCE [LARGE SCALE GENOMIC DNA]</scope>
    <source>
        <strain>ATCC VR-144 / Wilmington</strain>
    </source>
</reference>
<feature type="chain" id="PRO_0000291839" description="Probable chromosome-partitioning protein ParB">
    <location>
        <begin position="1"/>
        <end position="286"/>
    </location>
</feature>
<sequence>MVKNKGLGRGLSSLLGEEVLPIKSEIVQIINIDKIKPNENQPRKHFEYNKIKELADSILNNGLLQPIIVDNNFQIIAGERRWRACKLAQVLEIPVIIKNFDTRESMETALIENIQRTDLTVMEEARGFKYLVDNFNYTVEKLAERLGKSRSHIANLLRLNNLPQSIQDKLNENILSMGHARCLINHEYAEEIANHIINHDLNVRQTEALVRQWHKNEYKKSTNNTNKVGKLCFKDNIIDNDLELLVKALSKKFGIKITIDNCNLGGKLMFHYKDLEELDLILSKLN</sequence>
<evidence type="ECO:0000250" key="1"/>
<evidence type="ECO:0000305" key="2"/>
<organism>
    <name type="scientific">Rickettsia typhi (strain ATCC VR-144 / Wilmington)</name>
    <dbReference type="NCBI Taxonomy" id="257363"/>
    <lineage>
        <taxon>Bacteria</taxon>
        <taxon>Pseudomonadati</taxon>
        <taxon>Pseudomonadota</taxon>
        <taxon>Alphaproteobacteria</taxon>
        <taxon>Rickettsiales</taxon>
        <taxon>Rickettsiaceae</taxon>
        <taxon>Rickettsieae</taxon>
        <taxon>Rickettsia</taxon>
        <taxon>typhus group</taxon>
    </lineage>
</organism>
<proteinExistence type="inferred from homology"/>
<protein>
    <recommendedName>
        <fullName>Probable chromosome-partitioning protein ParB</fullName>
    </recommendedName>
</protein>